<sequence>MLQPKRMKFRKMFKGRNRGLANGTEVSFGTFGLKAVGRGRLTARQIESARRAMTRHIKRQGQIWIRVFPDKPITSKPLEVRMGKGKGNVEYWVCQIQPGKVLYEMNGVSEVIAREAFALAAAKLPIKTTFVTKTVM</sequence>
<comment type="function">
    <text evidence="1">Binds 23S rRNA and is also seen to make contacts with the A and possibly P site tRNAs.</text>
</comment>
<comment type="subunit">
    <text evidence="1">Part of the 50S ribosomal subunit.</text>
</comment>
<comment type="similarity">
    <text evidence="1">Belongs to the universal ribosomal protein uL16 family.</text>
</comment>
<keyword id="KW-0687">Ribonucleoprotein</keyword>
<keyword id="KW-0689">Ribosomal protein</keyword>
<keyword id="KW-0694">RNA-binding</keyword>
<keyword id="KW-0699">rRNA-binding</keyword>
<keyword id="KW-0820">tRNA-binding</keyword>
<name>RL16_SHESA</name>
<feature type="chain" id="PRO_1000054705" description="Large ribosomal subunit protein uL16">
    <location>
        <begin position="1"/>
        <end position="136"/>
    </location>
</feature>
<organism>
    <name type="scientific">Shewanella sp. (strain ANA-3)</name>
    <dbReference type="NCBI Taxonomy" id="94122"/>
    <lineage>
        <taxon>Bacteria</taxon>
        <taxon>Pseudomonadati</taxon>
        <taxon>Pseudomonadota</taxon>
        <taxon>Gammaproteobacteria</taxon>
        <taxon>Alteromonadales</taxon>
        <taxon>Shewanellaceae</taxon>
        <taxon>Shewanella</taxon>
    </lineage>
</organism>
<reference key="1">
    <citation type="submission" date="2006-09" db="EMBL/GenBank/DDBJ databases">
        <title>Complete sequence of chromosome 1 of Shewanella sp. ANA-3.</title>
        <authorList>
            <person name="Copeland A."/>
            <person name="Lucas S."/>
            <person name="Lapidus A."/>
            <person name="Barry K."/>
            <person name="Detter J.C."/>
            <person name="Glavina del Rio T."/>
            <person name="Hammon N."/>
            <person name="Israni S."/>
            <person name="Dalin E."/>
            <person name="Tice H."/>
            <person name="Pitluck S."/>
            <person name="Chertkov O."/>
            <person name="Brettin T."/>
            <person name="Bruce D."/>
            <person name="Han C."/>
            <person name="Tapia R."/>
            <person name="Gilna P."/>
            <person name="Schmutz J."/>
            <person name="Larimer F."/>
            <person name="Land M."/>
            <person name="Hauser L."/>
            <person name="Kyrpides N."/>
            <person name="Kim E."/>
            <person name="Newman D."/>
            <person name="Salticov C."/>
            <person name="Konstantinidis K."/>
            <person name="Klappenback J."/>
            <person name="Tiedje J."/>
            <person name="Richardson P."/>
        </authorList>
    </citation>
    <scope>NUCLEOTIDE SEQUENCE [LARGE SCALE GENOMIC DNA]</scope>
    <source>
        <strain>ANA-3</strain>
    </source>
</reference>
<evidence type="ECO:0000255" key="1">
    <source>
        <dbReference type="HAMAP-Rule" id="MF_01342"/>
    </source>
</evidence>
<evidence type="ECO:0000305" key="2"/>
<proteinExistence type="inferred from homology"/>
<accession>A0KRN1</accession>
<protein>
    <recommendedName>
        <fullName evidence="1">Large ribosomal subunit protein uL16</fullName>
    </recommendedName>
    <alternativeName>
        <fullName evidence="2">50S ribosomal protein L16</fullName>
    </alternativeName>
</protein>
<dbReference type="EMBL" id="CP000469">
    <property type="protein sequence ID" value="ABK46450.1"/>
    <property type="molecule type" value="Genomic_DNA"/>
</dbReference>
<dbReference type="RefSeq" id="WP_006083593.1">
    <property type="nucleotide sequence ID" value="NC_008577.1"/>
</dbReference>
<dbReference type="SMR" id="A0KRN1"/>
<dbReference type="STRING" id="94122.Shewana3_0206"/>
<dbReference type="GeneID" id="94726193"/>
<dbReference type="KEGG" id="shn:Shewana3_0206"/>
<dbReference type="eggNOG" id="COG0197">
    <property type="taxonomic scope" value="Bacteria"/>
</dbReference>
<dbReference type="HOGENOM" id="CLU_078858_2_1_6"/>
<dbReference type="OrthoDB" id="9802589at2"/>
<dbReference type="Proteomes" id="UP000002589">
    <property type="component" value="Chromosome"/>
</dbReference>
<dbReference type="GO" id="GO:0022625">
    <property type="term" value="C:cytosolic large ribosomal subunit"/>
    <property type="evidence" value="ECO:0007669"/>
    <property type="project" value="TreeGrafter"/>
</dbReference>
<dbReference type="GO" id="GO:0019843">
    <property type="term" value="F:rRNA binding"/>
    <property type="evidence" value="ECO:0007669"/>
    <property type="project" value="UniProtKB-UniRule"/>
</dbReference>
<dbReference type="GO" id="GO:0003735">
    <property type="term" value="F:structural constituent of ribosome"/>
    <property type="evidence" value="ECO:0007669"/>
    <property type="project" value="InterPro"/>
</dbReference>
<dbReference type="GO" id="GO:0000049">
    <property type="term" value="F:tRNA binding"/>
    <property type="evidence" value="ECO:0007669"/>
    <property type="project" value="UniProtKB-KW"/>
</dbReference>
<dbReference type="GO" id="GO:0006412">
    <property type="term" value="P:translation"/>
    <property type="evidence" value="ECO:0007669"/>
    <property type="project" value="UniProtKB-UniRule"/>
</dbReference>
<dbReference type="CDD" id="cd01433">
    <property type="entry name" value="Ribosomal_L16_L10e"/>
    <property type="match status" value="1"/>
</dbReference>
<dbReference type="FunFam" id="3.90.1170.10:FF:000001">
    <property type="entry name" value="50S ribosomal protein L16"/>
    <property type="match status" value="1"/>
</dbReference>
<dbReference type="Gene3D" id="3.90.1170.10">
    <property type="entry name" value="Ribosomal protein L10e/L16"/>
    <property type="match status" value="1"/>
</dbReference>
<dbReference type="HAMAP" id="MF_01342">
    <property type="entry name" value="Ribosomal_uL16"/>
    <property type="match status" value="1"/>
</dbReference>
<dbReference type="InterPro" id="IPR047873">
    <property type="entry name" value="Ribosomal_uL16"/>
</dbReference>
<dbReference type="InterPro" id="IPR000114">
    <property type="entry name" value="Ribosomal_uL16_bact-type"/>
</dbReference>
<dbReference type="InterPro" id="IPR020798">
    <property type="entry name" value="Ribosomal_uL16_CS"/>
</dbReference>
<dbReference type="InterPro" id="IPR016180">
    <property type="entry name" value="Ribosomal_uL16_dom"/>
</dbReference>
<dbReference type="InterPro" id="IPR036920">
    <property type="entry name" value="Ribosomal_uL16_sf"/>
</dbReference>
<dbReference type="NCBIfam" id="TIGR01164">
    <property type="entry name" value="rplP_bact"/>
    <property type="match status" value="1"/>
</dbReference>
<dbReference type="PANTHER" id="PTHR12220">
    <property type="entry name" value="50S/60S RIBOSOMAL PROTEIN L16"/>
    <property type="match status" value="1"/>
</dbReference>
<dbReference type="PANTHER" id="PTHR12220:SF13">
    <property type="entry name" value="LARGE RIBOSOMAL SUBUNIT PROTEIN UL16M"/>
    <property type="match status" value="1"/>
</dbReference>
<dbReference type="Pfam" id="PF00252">
    <property type="entry name" value="Ribosomal_L16"/>
    <property type="match status" value="1"/>
</dbReference>
<dbReference type="PRINTS" id="PR00060">
    <property type="entry name" value="RIBOSOMALL16"/>
</dbReference>
<dbReference type="SUPFAM" id="SSF54686">
    <property type="entry name" value="Ribosomal protein L16p/L10e"/>
    <property type="match status" value="1"/>
</dbReference>
<dbReference type="PROSITE" id="PS00586">
    <property type="entry name" value="RIBOSOMAL_L16_1"/>
    <property type="match status" value="1"/>
</dbReference>
<dbReference type="PROSITE" id="PS00701">
    <property type="entry name" value="RIBOSOMAL_L16_2"/>
    <property type="match status" value="1"/>
</dbReference>
<gene>
    <name evidence="1" type="primary">rplP</name>
    <name type="ordered locus">Shewana3_0206</name>
</gene>